<comment type="similarity">
    <text evidence="1">Belongs to the SfsA family.</text>
</comment>
<keyword id="KW-1185">Reference proteome</keyword>
<name>SFSA_NATTJ</name>
<protein>
    <recommendedName>
        <fullName evidence="1">Sugar fermentation stimulation protein homolog</fullName>
    </recommendedName>
</protein>
<dbReference type="EMBL" id="CP001034">
    <property type="protein sequence ID" value="ACB85900.1"/>
    <property type="molecule type" value="Genomic_DNA"/>
</dbReference>
<dbReference type="RefSeq" id="WP_012448750.1">
    <property type="nucleotide sequence ID" value="NC_010718.1"/>
</dbReference>
<dbReference type="SMR" id="B2A8L6"/>
<dbReference type="STRING" id="457570.Nther_2335"/>
<dbReference type="KEGG" id="nth:Nther_2335"/>
<dbReference type="eggNOG" id="COG1489">
    <property type="taxonomic scope" value="Bacteria"/>
</dbReference>
<dbReference type="HOGENOM" id="CLU_052299_1_0_9"/>
<dbReference type="InParanoid" id="B2A8L6"/>
<dbReference type="OrthoDB" id="9802365at2"/>
<dbReference type="Proteomes" id="UP000001683">
    <property type="component" value="Chromosome"/>
</dbReference>
<dbReference type="GO" id="GO:0003677">
    <property type="term" value="F:DNA binding"/>
    <property type="evidence" value="ECO:0007669"/>
    <property type="project" value="InterPro"/>
</dbReference>
<dbReference type="CDD" id="cd22359">
    <property type="entry name" value="SfsA-like_bacterial"/>
    <property type="match status" value="1"/>
</dbReference>
<dbReference type="Gene3D" id="2.40.50.580">
    <property type="match status" value="1"/>
</dbReference>
<dbReference type="Gene3D" id="3.40.1350.60">
    <property type="match status" value="1"/>
</dbReference>
<dbReference type="HAMAP" id="MF_00095">
    <property type="entry name" value="SfsA"/>
    <property type="match status" value="1"/>
</dbReference>
<dbReference type="InterPro" id="IPR005224">
    <property type="entry name" value="SfsA"/>
</dbReference>
<dbReference type="InterPro" id="IPR040452">
    <property type="entry name" value="SfsA_C"/>
</dbReference>
<dbReference type="InterPro" id="IPR041465">
    <property type="entry name" value="SfsA_N"/>
</dbReference>
<dbReference type="NCBIfam" id="TIGR00230">
    <property type="entry name" value="sfsA"/>
    <property type="match status" value="1"/>
</dbReference>
<dbReference type="PANTHER" id="PTHR30545">
    <property type="entry name" value="SUGAR FERMENTATION STIMULATION PROTEIN A"/>
    <property type="match status" value="1"/>
</dbReference>
<dbReference type="PANTHER" id="PTHR30545:SF2">
    <property type="entry name" value="SUGAR FERMENTATION STIMULATION PROTEIN A"/>
    <property type="match status" value="1"/>
</dbReference>
<dbReference type="Pfam" id="PF03749">
    <property type="entry name" value="SfsA"/>
    <property type="match status" value="1"/>
</dbReference>
<dbReference type="Pfam" id="PF17746">
    <property type="entry name" value="SfsA_N"/>
    <property type="match status" value="1"/>
</dbReference>
<reference key="1">
    <citation type="submission" date="2008-04" db="EMBL/GenBank/DDBJ databases">
        <title>Complete sequence of chromosome of Natranaerobius thermophilus JW/NM-WN-LF.</title>
        <authorList>
            <consortium name="US DOE Joint Genome Institute"/>
            <person name="Copeland A."/>
            <person name="Lucas S."/>
            <person name="Lapidus A."/>
            <person name="Glavina del Rio T."/>
            <person name="Dalin E."/>
            <person name="Tice H."/>
            <person name="Bruce D."/>
            <person name="Goodwin L."/>
            <person name="Pitluck S."/>
            <person name="Chertkov O."/>
            <person name="Brettin T."/>
            <person name="Detter J.C."/>
            <person name="Han C."/>
            <person name="Kuske C.R."/>
            <person name="Schmutz J."/>
            <person name="Larimer F."/>
            <person name="Land M."/>
            <person name="Hauser L."/>
            <person name="Kyrpides N."/>
            <person name="Lykidis A."/>
            <person name="Mesbah N.M."/>
            <person name="Wiegel J."/>
        </authorList>
    </citation>
    <scope>NUCLEOTIDE SEQUENCE [LARGE SCALE GENOMIC DNA]</scope>
    <source>
        <strain>ATCC BAA-1301 / DSM 18059 / JW/NM-WN-LF</strain>
    </source>
</reference>
<gene>
    <name evidence="1" type="primary">sfsA</name>
    <name type="ordered locus">Nther_2335</name>
</gene>
<proteinExistence type="inferred from homology"/>
<accession>B2A8L6</accession>
<feature type="chain" id="PRO_1000202723" description="Sugar fermentation stimulation protein homolog">
    <location>
        <begin position="1"/>
        <end position="240"/>
    </location>
</feature>
<sequence>MIYNFIDSLIEGKFQKRLNRFVCNVEVNGESRLCHVPNSGRMKELLLPETPVLLQKKQGKQRKTDFDLALVLYEGHWVSVDSRLPNKLFEILVKKSLLPETSVAYGAEFLRREPSYGRGRFDMELMSTNSDRILIELKSVTLVQNNLALFPDAPTDRGRRHLEELTDSLREGYQPAVIFLVQRDDALCFAPNWEMDEAFSKALVQAQEQGVAVESYAFKVTPEGLNYCQRLPVTTQREVE</sequence>
<organism>
    <name type="scientific">Natranaerobius thermophilus (strain ATCC BAA-1301 / DSM 18059 / JW/NM-WN-LF)</name>
    <dbReference type="NCBI Taxonomy" id="457570"/>
    <lineage>
        <taxon>Bacteria</taxon>
        <taxon>Bacillati</taxon>
        <taxon>Bacillota</taxon>
        <taxon>Clostridia</taxon>
        <taxon>Natranaerobiales</taxon>
        <taxon>Natranaerobiaceae</taxon>
        <taxon>Natranaerobius</taxon>
    </lineage>
</organism>
<evidence type="ECO:0000255" key="1">
    <source>
        <dbReference type="HAMAP-Rule" id="MF_00095"/>
    </source>
</evidence>